<sequence>MSDKTNDDKTLSVNPKKTLTLKRPGVEQSTVRQNFSHGRTKAVVVETKKRKFSRPDEKPEVEAAAAPKPAAPAAAPQQAPASAPVSASAAQASAPQPAPVKAPATKAPAAPSAPVTKPHVAQQRPVHQRPGGQQAQRPRPADRSGMVLNTLSRSEMDARRRALEEAQIREVEERARAVEEAKRRAEEDARRAKEREESARRQAEEEARLKAEAEARRKAEEEAAKRMPQPEARSERRDDARPAPYGARPQQAGRPQGGRPQPAGRPQQGSPRPAPIIADAAPIAGKPLPQSQLRKPGQSDDDDDRRSGAARRGVAAKPEVRAPKVVKGEDDRRRGKLTLTSNLEEEGRSRSLSAMRRRQEKFKRSQMQETREKISREVTIPETITLQELAQRMAERSVDIIKYLMKQGQMMKPGDVIDADTAQLIAEEFGHTVKRVAESDVEEGIFDVADNESAMVSRPPVVTIMGHVDHGKTSLLDAIRHANVVSGEAGGITQHIGAYQVVQNGQKITFIDTPGHAAFTAMRARGAQATDIAILVVAADDSVMPQTIESINHAKAAGVPIIVAINKIDKPAADPQKVRTALLQHEVFVESMGGEVLDVEVSAKNKINLDKLLDAVLLQAEMLDLKADPDRTAEGVVIEAQLDRGRGSVATVLIQKGTLHPGDILVAGSEWGRVRALVNDRGEHVKEAGPAMPVEILGLQGTPQAGDRFAVVANEAKAREIAEYRQRLARDKAVARQSGARGSLEQMMNQLQVSGTKEFPLVIKGDVQGSIEAITNALDKLGTDEVRARIVHSGAGGITESDVSLAEASNAAIIGFNVRANKQARDSAEQQGIEIRYYNIIYDLIDDVKAAMSGLLSPERRETFLGNAEILEVFNITKVGKVAGCRVTEGKVERGAGVRLIRDNVVIHEGKLKTLKRFKDEVAEVPSGQECGMAFENYDDIRAGDVIEAFRVEHVSRTL</sequence>
<keyword id="KW-0963">Cytoplasm</keyword>
<keyword id="KW-0342">GTP-binding</keyword>
<keyword id="KW-0396">Initiation factor</keyword>
<keyword id="KW-0547">Nucleotide-binding</keyword>
<keyword id="KW-0648">Protein biosynthesis</keyword>
<comment type="function">
    <text evidence="2">One of the essential components for the initiation of protein synthesis. Protects formylmethionyl-tRNA from spontaneous hydrolysis and promotes its binding to the 30S ribosomal subunits. Also involved in the hydrolysis of GTP during the formation of the 70S ribosomal complex.</text>
</comment>
<comment type="subcellular location">
    <subcellularLocation>
        <location evidence="2">Cytoplasm</location>
    </subcellularLocation>
</comment>
<comment type="similarity">
    <text evidence="2">Belongs to the TRAFAC class translation factor GTPase superfamily. Classic translation factor GTPase family. IF-2 subfamily.</text>
</comment>
<reference key="1">
    <citation type="submission" date="2007-12" db="EMBL/GenBank/DDBJ databases">
        <title>Brucella suis ATCC 23445 whole genome shotgun sequencing project.</title>
        <authorList>
            <person name="Setubal J.C."/>
            <person name="Bowns C."/>
            <person name="Boyle S."/>
            <person name="Crasta O.R."/>
            <person name="Czar M.J."/>
            <person name="Dharmanolla C."/>
            <person name="Gillespie J.J."/>
            <person name="Kenyon R.W."/>
            <person name="Lu J."/>
            <person name="Mane S."/>
            <person name="Mohapatra S."/>
            <person name="Nagrani S."/>
            <person name="Purkayastha A."/>
            <person name="Rajasimha H.K."/>
            <person name="Shallom J.M."/>
            <person name="Shallom S."/>
            <person name="Shukla M."/>
            <person name="Snyder E.E."/>
            <person name="Sobral B.W."/>
            <person name="Wattam A.R."/>
            <person name="Will R."/>
            <person name="Williams K."/>
            <person name="Yoo H."/>
            <person name="Bruce D."/>
            <person name="Detter C."/>
            <person name="Munk C."/>
            <person name="Brettin T.S."/>
        </authorList>
    </citation>
    <scope>NUCLEOTIDE SEQUENCE [LARGE SCALE GENOMIC DNA]</scope>
    <source>
        <strain>ATCC 23445 / NCTC 10510</strain>
    </source>
</reference>
<proteinExistence type="inferred from homology"/>
<protein>
    <recommendedName>
        <fullName evidence="2">Translation initiation factor IF-2</fullName>
    </recommendedName>
</protein>
<dbReference type="EMBL" id="CP000911">
    <property type="protein sequence ID" value="ABY39012.1"/>
    <property type="molecule type" value="Genomic_DNA"/>
</dbReference>
<dbReference type="RefSeq" id="WP_002965227.1">
    <property type="nucleotide sequence ID" value="NC_010169.1"/>
</dbReference>
<dbReference type="SMR" id="B0CK11"/>
<dbReference type="GeneID" id="93017533"/>
<dbReference type="KEGG" id="bmt:BSUIS_A2002"/>
<dbReference type="HOGENOM" id="CLU_006301_10_0_5"/>
<dbReference type="Proteomes" id="UP000008545">
    <property type="component" value="Chromosome I"/>
</dbReference>
<dbReference type="GO" id="GO:0005829">
    <property type="term" value="C:cytosol"/>
    <property type="evidence" value="ECO:0007669"/>
    <property type="project" value="TreeGrafter"/>
</dbReference>
<dbReference type="GO" id="GO:0005525">
    <property type="term" value="F:GTP binding"/>
    <property type="evidence" value="ECO:0007669"/>
    <property type="project" value="UniProtKB-KW"/>
</dbReference>
<dbReference type="GO" id="GO:0003924">
    <property type="term" value="F:GTPase activity"/>
    <property type="evidence" value="ECO:0007669"/>
    <property type="project" value="UniProtKB-UniRule"/>
</dbReference>
<dbReference type="GO" id="GO:0097216">
    <property type="term" value="F:guanosine tetraphosphate binding"/>
    <property type="evidence" value="ECO:0007669"/>
    <property type="project" value="UniProtKB-ARBA"/>
</dbReference>
<dbReference type="GO" id="GO:0003743">
    <property type="term" value="F:translation initiation factor activity"/>
    <property type="evidence" value="ECO:0007669"/>
    <property type="project" value="UniProtKB-UniRule"/>
</dbReference>
<dbReference type="CDD" id="cd01887">
    <property type="entry name" value="IF2_eIF5B"/>
    <property type="match status" value="1"/>
</dbReference>
<dbReference type="CDD" id="cd03702">
    <property type="entry name" value="IF2_mtIF2_II"/>
    <property type="match status" value="1"/>
</dbReference>
<dbReference type="CDD" id="cd03692">
    <property type="entry name" value="mtIF2_IVc"/>
    <property type="match status" value="1"/>
</dbReference>
<dbReference type="CDD" id="cd22265">
    <property type="entry name" value="UDM1_RNF168"/>
    <property type="match status" value="1"/>
</dbReference>
<dbReference type="FunFam" id="2.40.30.10:FF:000007">
    <property type="entry name" value="Translation initiation factor IF-2"/>
    <property type="match status" value="1"/>
</dbReference>
<dbReference type="FunFam" id="2.40.30.10:FF:000008">
    <property type="entry name" value="Translation initiation factor IF-2"/>
    <property type="match status" value="1"/>
</dbReference>
<dbReference type="FunFam" id="3.40.50.10050:FF:000001">
    <property type="entry name" value="Translation initiation factor IF-2"/>
    <property type="match status" value="1"/>
</dbReference>
<dbReference type="FunFam" id="3.40.50.300:FF:000019">
    <property type="entry name" value="Translation initiation factor IF-2"/>
    <property type="match status" value="1"/>
</dbReference>
<dbReference type="Gene3D" id="3.40.50.300">
    <property type="entry name" value="P-loop containing nucleotide triphosphate hydrolases"/>
    <property type="match status" value="1"/>
</dbReference>
<dbReference type="Gene3D" id="2.40.30.10">
    <property type="entry name" value="Translation factors"/>
    <property type="match status" value="2"/>
</dbReference>
<dbReference type="Gene3D" id="3.40.50.10050">
    <property type="entry name" value="Translation initiation factor IF- 2, domain 3"/>
    <property type="match status" value="1"/>
</dbReference>
<dbReference type="HAMAP" id="MF_00100_B">
    <property type="entry name" value="IF_2_B"/>
    <property type="match status" value="1"/>
</dbReference>
<dbReference type="InterPro" id="IPR053905">
    <property type="entry name" value="EF-G-like_DII"/>
</dbReference>
<dbReference type="InterPro" id="IPR004161">
    <property type="entry name" value="EFTu-like_2"/>
</dbReference>
<dbReference type="InterPro" id="IPR013575">
    <property type="entry name" value="IF2_assoc_dom_bac"/>
</dbReference>
<dbReference type="InterPro" id="IPR044145">
    <property type="entry name" value="IF2_II"/>
</dbReference>
<dbReference type="InterPro" id="IPR006847">
    <property type="entry name" value="IF2_N"/>
</dbReference>
<dbReference type="InterPro" id="IPR027417">
    <property type="entry name" value="P-loop_NTPase"/>
</dbReference>
<dbReference type="InterPro" id="IPR005225">
    <property type="entry name" value="Small_GTP-bd"/>
</dbReference>
<dbReference type="InterPro" id="IPR000795">
    <property type="entry name" value="T_Tr_GTP-bd_dom"/>
</dbReference>
<dbReference type="InterPro" id="IPR000178">
    <property type="entry name" value="TF_IF2_bacterial-like"/>
</dbReference>
<dbReference type="InterPro" id="IPR015760">
    <property type="entry name" value="TIF_IF2"/>
</dbReference>
<dbReference type="InterPro" id="IPR023115">
    <property type="entry name" value="TIF_IF2_dom3"/>
</dbReference>
<dbReference type="InterPro" id="IPR036925">
    <property type="entry name" value="TIF_IF2_dom3_sf"/>
</dbReference>
<dbReference type="InterPro" id="IPR009000">
    <property type="entry name" value="Transl_B-barrel_sf"/>
</dbReference>
<dbReference type="NCBIfam" id="TIGR00487">
    <property type="entry name" value="IF-2"/>
    <property type="match status" value="1"/>
</dbReference>
<dbReference type="NCBIfam" id="TIGR00231">
    <property type="entry name" value="small_GTP"/>
    <property type="match status" value="1"/>
</dbReference>
<dbReference type="PANTHER" id="PTHR43381:SF5">
    <property type="entry name" value="TR-TYPE G DOMAIN-CONTAINING PROTEIN"/>
    <property type="match status" value="1"/>
</dbReference>
<dbReference type="PANTHER" id="PTHR43381">
    <property type="entry name" value="TRANSLATION INITIATION FACTOR IF-2-RELATED"/>
    <property type="match status" value="1"/>
</dbReference>
<dbReference type="Pfam" id="PF22042">
    <property type="entry name" value="EF-G_D2"/>
    <property type="match status" value="1"/>
</dbReference>
<dbReference type="Pfam" id="PF00009">
    <property type="entry name" value="GTP_EFTU"/>
    <property type="match status" value="1"/>
</dbReference>
<dbReference type="Pfam" id="PF03144">
    <property type="entry name" value="GTP_EFTU_D2"/>
    <property type="match status" value="1"/>
</dbReference>
<dbReference type="Pfam" id="PF11987">
    <property type="entry name" value="IF-2"/>
    <property type="match status" value="1"/>
</dbReference>
<dbReference type="Pfam" id="PF08364">
    <property type="entry name" value="IF2_assoc"/>
    <property type="match status" value="1"/>
</dbReference>
<dbReference type="Pfam" id="PF04760">
    <property type="entry name" value="IF2_N"/>
    <property type="match status" value="1"/>
</dbReference>
<dbReference type="SUPFAM" id="SSF52156">
    <property type="entry name" value="Initiation factor IF2/eIF5b, domain 3"/>
    <property type="match status" value="1"/>
</dbReference>
<dbReference type="SUPFAM" id="SSF52540">
    <property type="entry name" value="P-loop containing nucleoside triphosphate hydrolases"/>
    <property type="match status" value="1"/>
</dbReference>
<dbReference type="SUPFAM" id="SSF50447">
    <property type="entry name" value="Translation proteins"/>
    <property type="match status" value="2"/>
</dbReference>
<dbReference type="PROSITE" id="PS51722">
    <property type="entry name" value="G_TR_2"/>
    <property type="match status" value="1"/>
</dbReference>
<dbReference type="PROSITE" id="PS01176">
    <property type="entry name" value="IF2"/>
    <property type="match status" value="1"/>
</dbReference>
<name>IF2_BRUSI</name>
<gene>
    <name evidence="2" type="primary">infB</name>
    <name type="ordered locus">BSUIS_A2002</name>
</gene>
<feature type="chain" id="PRO_1000075595" description="Translation initiation factor IF-2">
    <location>
        <begin position="1"/>
        <end position="959"/>
    </location>
</feature>
<feature type="domain" description="tr-type G">
    <location>
        <begin position="457"/>
        <end position="626"/>
    </location>
</feature>
<feature type="region of interest" description="Disordered" evidence="3">
    <location>
        <begin position="1"/>
        <end position="374"/>
    </location>
</feature>
<feature type="region of interest" description="G1" evidence="1">
    <location>
        <begin position="466"/>
        <end position="473"/>
    </location>
</feature>
<feature type="region of interest" description="G2" evidence="1">
    <location>
        <begin position="491"/>
        <end position="495"/>
    </location>
</feature>
<feature type="region of interest" description="G3" evidence="1">
    <location>
        <begin position="512"/>
        <end position="515"/>
    </location>
</feature>
<feature type="region of interest" description="G4" evidence="1">
    <location>
        <begin position="566"/>
        <end position="569"/>
    </location>
</feature>
<feature type="region of interest" description="G5" evidence="1">
    <location>
        <begin position="602"/>
        <end position="604"/>
    </location>
</feature>
<feature type="compositionally biased region" description="Basic and acidic residues" evidence="3">
    <location>
        <begin position="1"/>
        <end position="10"/>
    </location>
</feature>
<feature type="compositionally biased region" description="Polar residues" evidence="3">
    <location>
        <begin position="27"/>
        <end position="37"/>
    </location>
</feature>
<feature type="compositionally biased region" description="Low complexity" evidence="3">
    <location>
        <begin position="63"/>
        <end position="118"/>
    </location>
</feature>
<feature type="compositionally biased region" description="Low complexity" evidence="3">
    <location>
        <begin position="128"/>
        <end position="138"/>
    </location>
</feature>
<feature type="compositionally biased region" description="Basic and acidic residues" evidence="3">
    <location>
        <begin position="154"/>
        <end position="225"/>
    </location>
</feature>
<feature type="compositionally biased region" description="Basic and acidic residues" evidence="3">
    <location>
        <begin position="232"/>
        <end position="241"/>
    </location>
</feature>
<feature type="compositionally biased region" description="Low complexity" evidence="3">
    <location>
        <begin position="246"/>
        <end position="284"/>
    </location>
</feature>
<feature type="compositionally biased region" description="Basic and acidic residues" evidence="3">
    <location>
        <begin position="318"/>
        <end position="333"/>
    </location>
</feature>
<feature type="binding site" evidence="2">
    <location>
        <begin position="466"/>
        <end position="473"/>
    </location>
    <ligand>
        <name>GTP</name>
        <dbReference type="ChEBI" id="CHEBI:37565"/>
    </ligand>
</feature>
<feature type="binding site" evidence="2">
    <location>
        <begin position="512"/>
        <end position="516"/>
    </location>
    <ligand>
        <name>GTP</name>
        <dbReference type="ChEBI" id="CHEBI:37565"/>
    </ligand>
</feature>
<feature type="binding site" evidence="2">
    <location>
        <begin position="566"/>
        <end position="569"/>
    </location>
    <ligand>
        <name>GTP</name>
        <dbReference type="ChEBI" id="CHEBI:37565"/>
    </ligand>
</feature>
<evidence type="ECO:0000250" key="1"/>
<evidence type="ECO:0000255" key="2">
    <source>
        <dbReference type="HAMAP-Rule" id="MF_00100"/>
    </source>
</evidence>
<evidence type="ECO:0000256" key="3">
    <source>
        <dbReference type="SAM" id="MobiDB-lite"/>
    </source>
</evidence>
<accession>B0CK11</accession>
<organism>
    <name type="scientific">Brucella suis (strain ATCC 23445 / NCTC 10510)</name>
    <dbReference type="NCBI Taxonomy" id="470137"/>
    <lineage>
        <taxon>Bacteria</taxon>
        <taxon>Pseudomonadati</taxon>
        <taxon>Pseudomonadota</taxon>
        <taxon>Alphaproteobacteria</taxon>
        <taxon>Hyphomicrobiales</taxon>
        <taxon>Brucellaceae</taxon>
        <taxon>Brucella/Ochrobactrum group</taxon>
        <taxon>Brucella</taxon>
    </lineage>
</organism>